<dbReference type="EC" id="2.7.11.1"/>
<dbReference type="EMBL" id="AAFI02000082">
    <property type="protein sequence ID" value="EAL64516.1"/>
    <property type="molecule type" value="Genomic_DNA"/>
</dbReference>
<dbReference type="RefSeq" id="XP_638020.1">
    <property type="nucleotide sequence ID" value="XM_632928.1"/>
</dbReference>
<dbReference type="SMR" id="Q54MH0"/>
<dbReference type="FunCoup" id="Q54MH0">
    <property type="interactions" value="2"/>
</dbReference>
<dbReference type="STRING" id="44689.Q54MH0"/>
<dbReference type="PaxDb" id="44689-DDB0219952"/>
<dbReference type="EnsemblProtists" id="EAL64516">
    <property type="protein sequence ID" value="EAL64516"/>
    <property type="gene ID" value="DDB_G0285963"/>
</dbReference>
<dbReference type="GeneID" id="8625371"/>
<dbReference type="KEGG" id="ddi:DDB_G0285963"/>
<dbReference type="dictyBase" id="DDB_G0285963">
    <property type="gene designation" value="fhkD"/>
</dbReference>
<dbReference type="VEuPathDB" id="AmoebaDB:DDB_G0285963"/>
<dbReference type="eggNOG" id="KOG0615">
    <property type="taxonomic scope" value="Eukaryota"/>
</dbReference>
<dbReference type="HOGENOM" id="CLU_388034_0_0_1"/>
<dbReference type="InParanoid" id="Q54MH0"/>
<dbReference type="OMA" id="RTELEWY"/>
<dbReference type="PhylomeDB" id="Q54MH0"/>
<dbReference type="PRO" id="PR:Q54MH0"/>
<dbReference type="Proteomes" id="UP000002195">
    <property type="component" value="Chromosome 4"/>
</dbReference>
<dbReference type="GO" id="GO:0005737">
    <property type="term" value="C:cytoplasm"/>
    <property type="evidence" value="ECO:0000318"/>
    <property type="project" value="GO_Central"/>
</dbReference>
<dbReference type="GO" id="GO:0005634">
    <property type="term" value="C:nucleus"/>
    <property type="evidence" value="ECO:0000318"/>
    <property type="project" value="GO_Central"/>
</dbReference>
<dbReference type="GO" id="GO:0005524">
    <property type="term" value="F:ATP binding"/>
    <property type="evidence" value="ECO:0007669"/>
    <property type="project" value="UniProtKB-KW"/>
</dbReference>
<dbReference type="GO" id="GO:0106310">
    <property type="term" value="F:protein serine kinase activity"/>
    <property type="evidence" value="ECO:0007669"/>
    <property type="project" value="RHEA"/>
</dbReference>
<dbReference type="GO" id="GO:0004674">
    <property type="term" value="F:protein serine/threonine kinase activity"/>
    <property type="evidence" value="ECO:0000318"/>
    <property type="project" value="GO_Central"/>
</dbReference>
<dbReference type="GO" id="GO:0000077">
    <property type="term" value="P:DNA damage checkpoint signaling"/>
    <property type="evidence" value="ECO:0000250"/>
    <property type="project" value="dictyBase"/>
</dbReference>
<dbReference type="GO" id="GO:0006974">
    <property type="term" value="P:DNA damage response"/>
    <property type="evidence" value="ECO:0000250"/>
    <property type="project" value="dictyBase"/>
</dbReference>
<dbReference type="GO" id="GO:0044773">
    <property type="term" value="P:mitotic DNA damage checkpoint signaling"/>
    <property type="evidence" value="ECO:0000318"/>
    <property type="project" value="GO_Central"/>
</dbReference>
<dbReference type="CDD" id="cd05117">
    <property type="entry name" value="STKc_CAMK"/>
    <property type="match status" value="1"/>
</dbReference>
<dbReference type="FunFam" id="1.10.510.10:FF:000571">
    <property type="entry name" value="Maternal embryonic leucine zipper kinase"/>
    <property type="match status" value="1"/>
</dbReference>
<dbReference type="FunFam" id="2.60.200.20:FF:000203">
    <property type="entry name" value="Probable serine/threonine-protein kinase fhkD"/>
    <property type="match status" value="1"/>
</dbReference>
<dbReference type="FunFam" id="3.30.200.20:FF:001500">
    <property type="entry name" value="Probable serine/threonine-protein kinase fhkD"/>
    <property type="match status" value="1"/>
</dbReference>
<dbReference type="Gene3D" id="2.60.200.20">
    <property type="match status" value="1"/>
</dbReference>
<dbReference type="Gene3D" id="3.30.200.20">
    <property type="entry name" value="Phosphorylase Kinase, domain 1"/>
    <property type="match status" value="1"/>
</dbReference>
<dbReference type="Gene3D" id="1.10.510.10">
    <property type="entry name" value="Transferase(Phosphotransferase) domain 1"/>
    <property type="match status" value="1"/>
</dbReference>
<dbReference type="InterPro" id="IPR000253">
    <property type="entry name" value="FHA_dom"/>
</dbReference>
<dbReference type="InterPro" id="IPR011009">
    <property type="entry name" value="Kinase-like_dom_sf"/>
</dbReference>
<dbReference type="InterPro" id="IPR000719">
    <property type="entry name" value="Prot_kinase_dom"/>
</dbReference>
<dbReference type="InterPro" id="IPR017441">
    <property type="entry name" value="Protein_kinase_ATP_BS"/>
</dbReference>
<dbReference type="InterPro" id="IPR008271">
    <property type="entry name" value="Ser/Thr_kinase_AS"/>
</dbReference>
<dbReference type="InterPro" id="IPR008984">
    <property type="entry name" value="SMAD_FHA_dom_sf"/>
</dbReference>
<dbReference type="PANTHER" id="PTHR24347">
    <property type="entry name" value="SERINE/THREONINE-PROTEIN KINASE"/>
    <property type="match status" value="1"/>
</dbReference>
<dbReference type="Pfam" id="PF00498">
    <property type="entry name" value="FHA"/>
    <property type="match status" value="1"/>
</dbReference>
<dbReference type="Pfam" id="PF00069">
    <property type="entry name" value="Pkinase"/>
    <property type="match status" value="1"/>
</dbReference>
<dbReference type="SMART" id="SM00240">
    <property type="entry name" value="FHA"/>
    <property type="match status" value="1"/>
</dbReference>
<dbReference type="SMART" id="SM00220">
    <property type="entry name" value="S_TKc"/>
    <property type="match status" value="1"/>
</dbReference>
<dbReference type="SUPFAM" id="SSF56112">
    <property type="entry name" value="Protein kinase-like (PK-like)"/>
    <property type="match status" value="1"/>
</dbReference>
<dbReference type="SUPFAM" id="SSF49879">
    <property type="entry name" value="SMAD/FHA domain"/>
    <property type="match status" value="1"/>
</dbReference>
<dbReference type="PROSITE" id="PS50006">
    <property type="entry name" value="FHA_DOMAIN"/>
    <property type="match status" value="1"/>
</dbReference>
<dbReference type="PROSITE" id="PS00107">
    <property type="entry name" value="PROTEIN_KINASE_ATP"/>
    <property type="match status" value="1"/>
</dbReference>
<dbReference type="PROSITE" id="PS50011">
    <property type="entry name" value="PROTEIN_KINASE_DOM"/>
    <property type="match status" value="1"/>
</dbReference>
<dbReference type="PROSITE" id="PS00108">
    <property type="entry name" value="PROTEIN_KINASE_ST"/>
    <property type="match status" value="1"/>
</dbReference>
<keyword id="KW-0067">ATP-binding</keyword>
<keyword id="KW-0418">Kinase</keyword>
<keyword id="KW-0547">Nucleotide-binding</keyword>
<keyword id="KW-1185">Reference proteome</keyword>
<keyword id="KW-0723">Serine/threonine-protein kinase</keyword>
<keyword id="KW-0808">Transferase</keyword>
<accession>Q54MH0</accession>
<evidence type="ECO:0000255" key="1">
    <source>
        <dbReference type="PROSITE-ProRule" id="PRU00086"/>
    </source>
</evidence>
<evidence type="ECO:0000255" key="2">
    <source>
        <dbReference type="PROSITE-ProRule" id="PRU00159"/>
    </source>
</evidence>
<evidence type="ECO:0000255" key="3">
    <source>
        <dbReference type="PROSITE-ProRule" id="PRU10027"/>
    </source>
</evidence>
<evidence type="ECO:0000256" key="4">
    <source>
        <dbReference type="SAM" id="MobiDB-lite"/>
    </source>
</evidence>
<evidence type="ECO:0000305" key="5"/>
<feature type="chain" id="PRO_0000367487" description="Probable serine/threonine-protein kinase fhkD">
    <location>
        <begin position="1"/>
        <end position="749"/>
    </location>
</feature>
<feature type="domain" description="FHA" evidence="1">
    <location>
        <begin position="47"/>
        <end position="150"/>
    </location>
</feature>
<feature type="domain" description="Protein kinase" evidence="2">
    <location>
        <begin position="199"/>
        <end position="472"/>
    </location>
</feature>
<feature type="region of interest" description="Disordered" evidence="4">
    <location>
        <begin position="84"/>
        <end position="130"/>
    </location>
</feature>
<feature type="region of interest" description="Disordered" evidence="4">
    <location>
        <begin position="512"/>
        <end position="620"/>
    </location>
</feature>
<feature type="region of interest" description="Disordered" evidence="4">
    <location>
        <begin position="640"/>
        <end position="749"/>
    </location>
</feature>
<feature type="compositionally biased region" description="Low complexity" evidence="4">
    <location>
        <begin position="84"/>
        <end position="126"/>
    </location>
</feature>
<feature type="compositionally biased region" description="Low complexity" evidence="4">
    <location>
        <begin position="516"/>
        <end position="561"/>
    </location>
</feature>
<feature type="compositionally biased region" description="Polar residues" evidence="4">
    <location>
        <begin position="562"/>
        <end position="572"/>
    </location>
</feature>
<feature type="compositionally biased region" description="Low complexity" evidence="4">
    <location>
        <begin position="590"/>
        <end position="611"/>
    </location>
</feature>
<feature type="compositionally biased region" description="Low complexity" evidence="4">
    <location>
        <begin position="651"/>
        <end position="667"/>
    </location>
</feature>
<feature type="compositionally biased region" description="Polar residues" evidence="4">
    <location>
        <begin position="668"/>
        <end position="687"/>
    </location>
</feature>
<feature type="compositionally biased region" description="Basic and acidic residues" evidence="4">
    <location>
        <begin position="696"/>
        <end position="707"/>
    </location>
</feature>
<feature type="compositionally biased region" description="Low complexity" evidence="4">
    <location>
        <begin position="708"/>
        <end position="739"/>
    </location>
</feature>
<feature type="active site" description="Proton acceptor" evidence="2 3">
    <location>
        <position position="323"/>
    </location>
</feature>
<feature type="binding site" evidence="2">
    <location>
        <begin position="205"/>
        <end position="213"/>
    </location>
    <ligand>
        <name>ATP</name>
        <dbReference type="ChEBI" id="CHEBI:30616"/>
    </ligand>
</feature>
<feature type="binding site" evidence="2">
    <location>
        <position position="228"/>
    </location>
    <ligand>
        <name>ATP</name>
        <dbReference type="ChEBI" id="CHEBI:30616"/>
    </ligand>
</feature>
<name>FHKD_DICDI</name>
<comment type="catalytic activity">
    <reaction>
        <text>L-seryl-[protein] + ATP = O-phospho-L-seryl-[protein] + ADP + H(+)</text>
        <dbReference type="Rhea" id="RHEA:17989"/>
        <dbReference type="Rhea" id="RHEA-COMP:9863"/>
        <dbReference type="Rhea" id="RHEA-COMP:11604"/>
        <dbReference type="ChEBI" id="CHEBI:15378"/>
        <dbReference type="ChEBI" id="CHEBI:29999"/>
        <dbReference type="ChEBI" id="CHEBI:30616"/>
        <dbReference type="ChEBI" id="CHEBI:83421"/>
        <dbReference type="ChEBI" id="CHEBI:456216"/>
        <dbReference type="EC" id="2.7.11.1"/>
    </reaction>
</comment>
<comment type="catalytic activity">
    <reaction>
        <text>L-threonyl-[protein] + ATP = O-phospho-L-threonyl-[protein] + ADP + H(+)</text>
        <dbReference type="Rhea" id="RHEA:46608"/>
        <dbReference type="Rhea" id="RHEA-COMP:11060"/>
        <dbReference type="Rhea" id="RHEA-COMP:11605"/>
        <dbReference type="ChEBI" id="CHEBI:15378"/>
        <dbReference type="ChEBI" id="CHEBI:30013"/>
        <dbReference type="ChEBI" id="CHEBI:30616"/>
        <dbReference type="ChEBI" id="CHEBI:61977"/>
        <dbReference type="ChEBI" id="CHEBI:456216"/>
        <dbReference type="EC" id="2.7.11.1"/>
    </reaction>
</comment>
<comment type="similarity">
    <text evidence="5">Belongs to the protein kinase superfamily. CAMK Ser/Thr protein kinase family. CHK2 subfamily.</text>
</comment>
<reference key="1">
    <citation type="journal article" date="2005" name="Nature">
        <title>The genome of the social amoeba Dictyostelium discoideum.</title>
        <authorList>
            <person name="Eichinger L."/>
            <person name="Pachebat J.A."/>
            <person name="Gloeckner G."/>
            <person name="Rajandream M.A."/>
            <person name="Sucgang R."/>
            <person name="Berriman M."/>
            <person name="Song J."/>
            <person name="Olsen R."/>
            <person name="Szafranski K."/>
            <person name="Xu Q."/>
            <person name="Tunggal B."/>
            <person name="Kummerfeld S."/>
            <person name="Madera M."/>
            <person name="Konfortov B.A."/>
            <person name="Rivero F."/>
            <person name="Bankier A.T."/>
            <person name="Lehmann R."/>
            <person name="Hamlin N."/>
            <person name="Davies R."/>
            <person name="Gaudet P."/>
            <person name="Fey P."/>
            <person name="Pilcher K."/>
            <person name="Chen G."/>
            <person name="Saunders D."/>
            <person name="Sodergren E.J."/>
            <person name="Davis P."/>
            <person name="Kerhornou A."/>
            <person name="Nie X."/>
            <person name="Hall N."/>
            <person name="Anjard C."/>
            <person name="Hemphill L."/>
            <person name="Bason N."/>
            <person name="Farbrother P."/>
            <person name="Desany B."/>
            <person name="Just E."/>
            <person name="Morio T."/>
            <person name="Rost R."/>
            <person name="Churcher C.M."/>
            <person name="Cooper J."/>
            <person name="Haydock S."/>
            <person name="van Driessche N."/>
            <person name="Cronin A."/>
            <person name="Goodhead I."/>
            <person name="Muzny D.M."/>
            <person name="Mourier T."/>
            <person name="Pain A."/>
            <person name="Lu M."/>
            <person name="Harper D."/>
            <person name="Lindsay R."/>
            <person name="Hauser H."/>
            <person name="James K.D."/>
            <person name="Quiles M."/>
            <person name="Madan Babu M."/>
            <person name="Saito T."/>
            <person name="Buchrieser C."/>
            <person name="Wardroper A."/>
            <person name="Felder M."/>
            <person name="Thangavelu M."/>
            <person name="Johnson D."/>
            <person name="Knights A."/>
            <person name="Loulseged H."/>
            <person name="Mungall K.L."/>
            <person name="Oliver K."/>
            <person name="Price C."/>
            <person name="Quail M.A."/>
            <person name="Urushihara H."/>
            <person name="Hernandez J."/>
            <person name="Rabbinowitsch E."/>
            <person name="Steffen D."/>
            <person name="Sanders M."/>
            <person name="Ma J."/>
            <person name="Kohara Y."/>
            <person name="Sharp S."/>
            <person name="Simmonds M.N."/>
            <person name="Spiegler S."/>
            <person name="Tivey A."/>
            <person name="Sugano S."/>
            <person name="White B."/>
            <person name="Walker D."/>
            <person name="Woodward J.R."/>
            <person name="Winckler T."/>
            <person name="Tanaka Y."/>
            <person name="Shaulsky G."/>
            <person name="Schleicher M."/>
            <person name="Weinstock G.M."/>
            <person name="Rosenthal A."/>
            <person name="Cox E.C."/>
            <person name="Chisholm R.L."/>
            <person name="Gibbs R.A."/>
            <person name="Loomis W.F."/>
            <person name="Platzer M."/>
            <person name="Kay R.R."/>
            <person name="Williams J.G."/>
            <person name="Dear P.H."/>
            <person name="Noegel A.A."/>
            <person name="Barrell B.G."/>
            <person name="Kuspa A."/>
        </authorList>
    </citation>
    <scope>NUCLEOTIDE SEQUENCE [LARGE SCALE GENOMIC DNA]</scope>
    <source>
        <strain>AX4</strain>
    </source>
</reference>
<organism>
    <name type="scientific">Dictyostelium discoideum</name>
    <name type="common">Social amoeba</name>
    <dbReference type="NCBI Taxonomy" id="44689"/>
    <lineage>
        <taxon>Eukaryota</taxon>
        <taxon>Amoebozoa</taxon>
        <taxon>Evosea</taxon>
        <taxon>Eumycetozoa</taxon>
        <taxon>Dictyostelia</taxon>
        <taxon>Dictyosteliales</taxon>
        <taxon>Dictyosteliaceae</taxon>
        <taxon>Dictyostelium</taxon>
    </lineage>
</organism>
<proteinExistence type="inferred from homology"/>
<gene>
    <name type="primary">fhkD</name>
    <name type="synonym">fhakd</name>
    <name type="ORF">DDB_G0285963</name>
</gene>
<sequence length="749" mass="83510">MDEATQRQDPIEETDAEKKVQVVPSLWGRLVSNHPESRHIDLIEHSIFFGRNPKRCQVVLHDPTVSGIHCRIFREEIPCQKYNNNNNNDGDNNNNNNNNNNNNNNNNNNNNNNNNNNNNNNNNNNNTTKNYITKITDTSSNGTFVKGCILGKDKTTIIQNGDMVSFTSAKLISSLSFTFLDLTNPYIDEPFEEEMNKKYSIQGILGTGNFSVVKRCIRRDTGEVFAVKIIDKKKFWSQTKTRRQMESEVEILQKIKHPNIISIIDIVQSDRYFYIVLELATGGELFEKIKQKGRFSEPEAKDTFKQILEAVSYLHDLNISHRDLKPENILISAVSHGKSSVIKVTDFGLAKIIGEKEMATTLCGTPLYVAPEIIRNCLHGDGGAQVNTGYGKEVDVWSLGCILYILLSGRPPFDFDHTNNFNLKLINQGLYNFSLPVWDVVTENAKDLIKKLLNVDPTKRISTKGALSHDWFNDDDLLRCSTVIANQSPISKSPQRSHGVVQLPVVDVKSKNIPMTLNSTTTNTTSPNNNNNNNNNNNNKNNNKNIIKSLNSNSNNYNNNSVLKKTSQSPKTKSNRPKLQFEQPSPNQHNNNNNNNNNNNNNNNNNNNNNNSSGGKPAIINNNGNLYSKFMATNNDPFDCTPTSTPVKPITNSTTTSTATSMPTSNSVTMGTSSTSIPVSNSITMKSPSILALSDDGDKKRKEKESSSSENVNDVIVINSNNHNNNNNNNHNINNGISSKPPPKRLKGS</sequence>
<protein>
    <recommendedName>
        <fullName>Probable serine/threonine-protein kinase fhkD</fullName>
        <ecNumber>2.7.11.1</ecNumber>
    </recommendedName>
    <alternativeName>
        <fullName>Forkhead-associated kinase protein D</fullName>
    </alternativeName>
</protein>